<gene>
    <name evidence="1" type="primary">carA</name>
    <name type="synonym">pyrA</name>
    <name type="ordered locus">Z0037</name>
    <name type="ordered locus">ECs0035</name>
</gene>
<keyword id="KW-0028">Amino-acid biosynthesis</keyword>
<keyword id="KW-0055">Arginine biosynthesis</keyword>
<keyword id="KW-0067">ATP-binding</keyword>
<keyword id="KW-0315">Glutamine amidotransferase</keyword>
<keyword id="KW-0436">Ligase</keyword>
<keyword id="KW-0547">Nucleotide-binding</keyword>
<keyword id="KW-0665">Pyrimidine biosynthesis</keyword>
<keyword id="KW-1185">Reference proteome</keyword>
<proteinExistence type="inferred from homology"/>
<dbReference type="EC" id="6.3.5.5" evidence="1"/>
<dbReference type="EMBL" id="AE005174">
    <property type="protein sequence ID" value="AAG54334.1"/>
    <property type="molecule type" value="Genomic_DNA"/>
</dbReference>
<dbReference type="EMBL" id="BA000007">
    <property type="protein sequence ID" value="BAB33458.1"/>
    <property type="molecule type" value="Genomic_DNA"/>
</dbReference>
<dbReference type="PIR" id="C90633">
    <property type="entry name" value="C90633"/>
</dbReference>
<dbReference type="RefSeq" id="NP_308062.1">
    <property type="nucleotide sequence ID" value="NC_002695.1"/>
</dbReference>
<dbReference type="RefSeq" id="WP_000597260.1">
    <property type="nucleotide sequence ID" value="NZ_VOAI01000002.1"/>
</dbReference>
<dbReference type="SMR" id="P0A6F2"/>
<dbReference type="STRING" id="155864.Z0037"/>
<dbReference type="MEROPS" id="C26.954"/>
<dbReference type="GeneID" id="913431"/>
<dbReference type="GeneID" id="93777404"/>
<dbReference type="KEGG" id="ece:Z0037"/>
<dbReference type="KEGG" id="ecs:ECs_0035"/>
<dbReference type="PATRIC" id="fig|386585.9.peg.131"/>
<dbReference type="eggNOG" id="COG0505">
    <property type="taxonomic scope" value="Bacteria"/>
</dbReference>
<dbReference type="HOGENOM" id="CLU_035901_1_1_6"/>
<dbReference type="OMA" id="CFSVQYH"/>
<dbReference type="UniPathway" id="UPA00068">
    <property type="reaction ID" value="UER00171"/>
</dbReference>
<dbReference type="UniPathway" id="UPA00070">
    <property type="reaction ID" value="UER00115"/>
</dbReference>
<dbReference type="Proteomes" id="UP000000558">
    <property type="component" value="Chromosome"/>
</dbReference>
<dbReference type="Proteomes" id="UP000002519">
    <property type="component" value="Chromosome"/>
</dbReference>
<dbReference type="GO" id="GO:0005524">
    <property type="term" value="F:ATP binding"/>
    <property type="evidence" value="ECO:0007669"/>
    <property type="project" value="UniProtKB-UniRule"/>
</dbReference>
<dbReference type="GO" id="GO:0004088">
    <property type="term" value="F:carbamoyl-phosphate synthase (glutamine-hydrolyzing) activity"/>
    <property type="evidence" value="ECO:0007669"/>
    <property type="project" value="UniProtKB-UniRule"/>
</dbReference>
<dbReference type="GO" id="GO:0004359">
    <property type="term" value="F:glutaminase activity"/>
    <property type="evidence" value="ECO:0007669"/>
    <property type="project" value="RHEA"/>
</dbReference>
<dbReference type="GO" id="GO:0006207">
    <property type="term" value="P:'de novo' pyrimidine nucleobase biosynthetic process"/>
    <property type="evidence" value="ECO:0007669"/>
    <property type="project" value="InterPro"/>
</dbReference>
<dbReference type="GO" id="GO:0044205">
    <property type="term" value="P:'de novo' UMP biosynthetic process"/>
    <property type="evidence" value="ECO:0007669"/>
    <property type="project" value="UniProtKB-UniRule"/>
</dbReference>
<dbReference type="GO" id="GO:0006541">
    <property type="term" value="P:glutamine metabolic process"/>
    <property type="evidence" value="ECO:0007669"/>
    <property type="project" value="InterPro"/>
</dbReference>
<dbReference type="GO" id="GO:0006526">
    <property type="term" value="P:L-arginine biosynthetic process"/>
    <property type="evidence" value="ECO:0007669"/>
    <property type="project" value="UniProtKB-UniRule"/>
</dbReference>
<dbReference type="CDD" id="cd01744">
    <property type="entry name" value="GATase1_CPSase"/>
    <property type="match status" value="1"/>
</dbReference>
<dbReference type="FunFam" id="3.40.50.880:FF:000011">
    <property type="entry name" value="Carbamoyl-phosphate synthase small chain"/>
    <property type="match status" value="1"/>
</dbReference>
<dbReference type="FunFam" id="3.50.30.20:FF:000001">
    <property type="entry name" value="Carbamoyl-phosphate synthase small chain"/>
    <property type="match status" value="1"/>
</dbReference>
<dbReference type="Gene3D" id="3.40.50.880">
    <property type="match status" value="1"/>
</dbReference>
<dbReference type="Gene3D" id="3.50.30.20">
    <property type="entry name" value="Carbamoyl-phosphate synthase small subunit, N-terminal domain"/>
    <property type="match status" value="1"/>
</dbReference>
<dbReference type="HAMAP" id="MF_01209">
    <property type="entry name" value="CPSase_S_chain"/>
    <property type="match status" value="1"/>
</dbReference>
<dbReference type="InterPro" id="IPR050472">
    <property type="entry name" value="Anth_synth/Amidotransfase"/>
</dbReference>
<dbReference type="InterPro" id="IPR006274">
    <property type="entry name" value="CarbamoylP_synth_ssu"/>
</dbReference>
<dbReference type="InterPro" id="IPR002474">
    <property type="entry name" value="CarbamoylP_synth_ssu_N"/>
</dbReference>
<dbReference type="InterPro" id="IPR036480">
    <property type="entry name" value="CarbP_synth_ssu_N_sf"/>
</dbReference>
<dbReference type="InterPro" id="IPR029062">
    <property type="entry name" value="Class_I_gatase-like"/>
</dbReference>
<dbReference type="InterPro" id="IPR035686">
    <property type="entry name" value="CPSase_GATase1"/>
</dbReference>
<dbReference type="InterPro" id="IPR017926">
    <property type="entry name" value="GATASE"/>
</dbReference>
<dbReference type="NCBIfam" id="TIGR01368">
    <property type="entry name" value="CPSaseIIsmall"/>
    <property type="match status" value="1"/>
</dbReference>
<dbReference type="NCBIfam" id="NF009475">
    <property type="entry name" value="PRK12838.1"/>
    <property type="match status" value="1"/>
</dbReference>
<dbReference type="PANTHER" id="PTHR43418:SF7">
    <property type="entry name" value="CARBAMOYL-PHOSPHATE SYNTHASE SMALL CHAIN"/>
    <property type="match status" value="1"/>
</dbReference>
<dbReference type="PANTHER" id="PTHR43418">
    <property type="entry name" value="MULTIFUNCTIONAL TRYPTOPHAN BIOSYNTHESIS PROTEIN-RELATED"/>
    <property type="match status" value="1"/>
</dbReference>
<dbReference type="Pfam" id="PF00988">
    <property type="entry name" value="CPSase_sm_chain"/>
    <property type="match status" value="1"/>
</dbReference>
<dbReference type="Pfam" id="PF00117">
    <property type="entry name" value="GATase"/>
    <property type="match status" value="1"/>
</dbReference>
<dbReference type="PRINTS" id="PR00097">
    <property type="entry name" value="ANTSNTHASEII"/>
</dbReference>
<dbReference type="PRINTS" id="PR00099">
    <property type="entry name" value="CPSGATASE"/>
</dbReference>
<dbReference type="PRINTS" id="PR00096">
    <property type="entry name" value="GATASE"/>
</dbReference>
<dbReference type="SMART" id="SM01097">
    <property type="entry name" value="CPSase_sm_chain"/>
    <property type="match status" value="1"/>
</dbReference>
<dbReference type="SUPFAM" id="SSF52021">
    <property type="entry name" value="Carbamoyl phosphate synthetase, small subunit N-terminal domain"/>
    <property type="match status" value="1"/>
</dbReference>
<dbReference type="SUPFAM" id="SSF52317">
    <property type="entry name" value="Class I glutamine amidotransferase-like"/>
    <property type="match status" value="1"/>
</dbReference>
<dbReference type="PROSITE" id="PS51273">
    <property type="entry name" value="GATASE_TYPE_1"/>
    <property type="match status" value="1"/>
</dbReference>
<sequence length="382" mass="41431">MIKSALLVLEDGTQFHGRAIGATGSAVGEVVFNTSMTGYQEILTDPSYSRQIVTLTYPHIGNVGTNDADEESSQVHAQGLVIRDLPLIASNFRNTEDLSSYLKRHNIVAIADIDTRKLTRLLREKGAQNGCIIAGDNPDAALALEKARAFPGLNGMDLAKEVTTAEAYSWTQGSWTLTGGLPEAKKEDELPFHVVAYDFGAKRNILRMLVDRGCRLTIVPAQTSAEDVLKMNPDGIFLSNGPGDPAPCDYAITAIQKFLETDIPVFGICLGHQLLALASGAKTVKMKFGHHGGNHPVKDVEKNVVMITAQNHGFAVDEATLPANLRVTHKSLFDGTLQGIHRTDKPAFSFQGHPEASPGPHDAAPLFDHFIELIEQYRKTAK</sequence>
<feature type="chain" id="PRO_0000112275" description="Carbamoyl phosphate synthase small chain">
    <location>
        <begin position="1"/>
        <end position="382"/>
    </location>
</feature>
<feature type="domain" description="Glutamine amidotransferase type-1" evidence="1">
    <location>
        <begin position="193"/>
        <end position="380"/>
    </location>
</feature>
<feature type="region of interest" description="CPSase" evidence="1">
    <location>
        <begin position="1"/>
        <end position="189"/>
    </location>
</feature>
<feature type="active site" description="Nucleophile" evidence="1">
    <location>
        <position position="269"/>
    </location>
</feature>
<feature type="active site" evidence="1">
    <location>
        <position position="353"/>
    </location>
</feature>
<feature type="active site" evidence="1">
    <location>
        <position position="355"/>
    </location>
</feature>
<feature type="binding site" evidence="1">
    <location>
        <position position="47"/>
    </location>
    <ligand>
        <name>L-glutamine</name>
        <dbReference type="ChEBI" id="CHEBI:58359"/>
    </ligand>
</feature>
<feature type="binding site" evidence="1">
    <location>
        <position position="241"/>
    </location>
    <ligand>
        <name>L-glutamine</name>
        <dbReference type="ChEBI" id="CHEBI:58359"/>
    </ligand>
</feature>
<feature type="binding site" evidence="1">
    <location>
        <position position="243"/>
    </location>
    <ligand>
        <name>L-glutamine</name>
        <dbReference type="ChEBI" id="CHEBI:58359"/>
    </ligand>
</feature>
<feature type="binding site" evidence="1">
    <location>
        <position position="270"/>
    </location>
    <ligand>
        <name>L-glutamine</name>
        <dbReference type="ChEBI" id="CHEBI:58359"/>
    </ligand>
</feature>
<feature type="binding site" evidence="1">
    <location>
        <position position="273"/>
    </location>
    <ligand>
        <name>L-glutamine</name>
        <dbReference type="ChEBI" id="CHEBI:58359"/>
    </ligand>
</feature>
<feature type="binding site" evidence="1">
    <location>
        <position position="311"/>
    </location>
    <ligand>
        <name>L-glutamine</name>
        <dbReference type="ChEBI" id="CHEBI:58359"/>
    </ligand>
</feature>
<feature type="binding site" evidence="1">
    <location>
        <position position="313"/>
    </location>
    <ligand>
        <name>L-glutamine</name>
        <dbReference type="ChEBI" id="CHEBI:58359"/>
    </ligand>
</feature>
<feature type="binding site" evidence="1">
    <location>
        <position position="314"/>
    </location>
    <ligand>
        <name>L-glutamine</name>
        <dbReference type="ChEBI" id="CHEBI:58359"/>
    </ligand>
</feature>
<reference key="1">
    <citation type="journal article" date="2001" name="Nature">
        <title>Genome sequence of enterohaemorrhagic Escherichia coli O157:H7.</title>
        <authorList>
            <person name="Perna N.T."/>
            <person name="Plunkett G. III"/>
            <person name="Burland V."/>
            <person name="Mau B."/>
            <person name="Glasner J.D."/>
            <person name="Rose D.J."/>
            <person name="Mayhew G.F."/>
            <person name="Evans P.S."/>
            <person name="Gregor J."/>
            <person name="Kirkpatrick H.A."/>
            <person name="Posfai G."/>
            <person name="Hackett J."/>
            <person name="Klink S."/>
            <person name="Boutin A."/>
            <person name="Shao Y."/>
            <person name="Miller L."/>
            <person name="Grotbeck E.J."/>
            <person name="Davis N.W."/>
            <person name="Lim A."/>
            <person name="Dimalanta E.T."/>
            <person name="Potamousis K."/>
            <person name="Apodaca J."/>
            <person name="Anantharaman T.S."/>
            <person name="Lin J."/>
            <person name="Yen G."/>
            <person name="Schwartz D.C."/>
            <person name="Welch R.A."/>
            <person name="Blattner F.R."/>
        </authorList>
    </citation>
    <scope>NUCLEOTIDE SEQUENCE [LARGE SCALE GENOMIC DNA]</scope>
    <source>
        <strain>O157:H7 / EDL933 / ATCC 700927 / EHEC</strain>
    </source>
</reference>
<reference key="2">
    <citation type="journal article" date="2001" name="DNA Res.">
        <title>Complete genome sequence of enterohemorrhagic Escherichia coli O157:H7 and genomic comparison with a laboratory strain K-12.</title>
        <authorList>
            <person name="Hayashi T."/>
            <person name="Makino K."/>
            <person name="Ohnishi M."/>
            <person name="Kurokawa K."/>
            <person name="Ishii K."/>
            <person name="Yokoyama K."/>
            <person name="Han C.-G."/>
            <person name="Ohtsubo E."/>
            <person name="Nakayama K."/>
            <person name="Murata T."/>
            <person name="Tanaka M."/>
            <person name="Tobe T."/>
            <person name="Iida T."/>
            <person name="Takami H."/>
            <person name="Honda T."/>
            <person name="Sasakawa C."/>
            <person name="Ogasawara N."/>
            <person name="Yasunaga T."/>
            <person name="Kuhara S."/>
            <person name="Shiba T."/>
            <person name="Hattori M."/>
            <person name="Shinagawa H."/>
        </authorList>
    </citation>
    <scope>NUCLEOTIDE SEQUENCE [LARGE SCALE GENOMIC DNA]</scope>
    <source>
        <strain>O157:H7 / Sakai / RIMD 0509952 / EHEC</strain>
    </source>
</reference>
<organism>
    <name type="scientific">Escherichia coli O157:H7</name>
    <dbReference type="NCBI Taxonomy" id="83334"/>
    <lineage>
        <taxon>Bacteria</taxon>
        <taxon>Pseudomonadati</taxon>
        <taxon>Pseudomonadota</taxon>
        <taxon>Gammaproteobacteria</taxon>
        <taxon>Enterobacterales</taxon>
        <taxon>Enterobacteriaceae</taxon>
        <taxon>Escherichia</taxon>
    </lineage>
</organism>
<evidence type="ECO:0000255" key="1">
    <source>
        <dbReference type="HAMAP-Rule" id="MF_01209"/>
    </source>
</evidence>
<comment type="function">
    <text evidence="1">Small subunit of the glutamine-dependent carbamoyl phosphate synthetase (CPSase). CPSase catalyzes the formation of carbamoyl phosphate from the ammonia moiety of glutamine, carbonate, and phosphate donated by ATP, constituting the first step of 2 biosynthetic pathways, one leading to arginine and/or urea and the other to pyrimidine nucleotides. The small subunit (glutamine amidotransferase) binds and cleaves glutamine to supply the large subunit with the substrate ammonia.</text>
</comment>
<comment type="catalytic activity">
    <reaction evidence="1">
        <text>hydrogencarbonate + L-glutamine + 2 ATP + H2O = carbamoyl phosphate + L-glutamate + 2 ADP + phosphate + 2 H(+)</text>
        <dbReference type="Rhea" id="RHEA:18633"/>
        <dbReference type="ChEBI" id="CHEBI:15377"/>
        <dbReference type="ChEBI" id="CHEBI:15378"/>
        <dbReference type="ChEBI" id="CHEBI:17544"/>
        <dbReference type="ChEBI" id="CHEBI:29985"/>
        <dbReference type="ChEBI" id="CHEBI:30616"/>
        <dbReference type="ChEBI" id="CHEBI:43474"/>
        <dbReference type="ChEBI" id="CHEBI:58228"/>
        <dbReference type="ChEBI" id="CHEBI:58359"/>
        <dbReference type="ChEBI" id="CHEBI:456216"/>
        <dbReference type="EC" id="6.3.5.5"/>
    </reaction>
</comment>
<comment type="catalytic activity">
    <molecule>Carbamoyl phosphate synthase small chain</molecule>
    <reaction evidence="1">
        <text>L-glutamine + H2O = L-glutamate + NH4(+)</text>
        <dbReference type="Rhea" id="RHEA:15889"/>
        <dbReference type="ChEBI" id="CHEBI:15377"/>
        <dbReference type="ChEBI" id="CHEBI:28938"/>
        <dbReference type="ChEBI" id="CHEBI:29985"/>
        <dbReference type="ChEBI" id="CHEBI:58359"/>
    </reaction>
</comment>
<comment type="pathway">
    <text evidence="1">Amino-acid biosynthesis; L-arginine biosynthesis; carbamoyl phosphate from bicarbonate: step 1/1.</text>
</comment>
<comment type="pathway">
    <text evidence="1">Pyrimidine metabolism; UMP biosynthesis via de novo pathway; (S)-dihydroorotate from bicarbonate: step 1/3.</text>
</comment>
<comment type="subunit">
    <text evidence="1">Composed of two chains; the small (or glutamine) chain promotes the hydrolysis of glutamine to ammonia, which is used by the large (or ammonia) chain to synthesize carbamoyl phosphate. Tetramer of heterodimers (alpha,beta)4.</text>
</comment>
<comment type="similarity">
    <text evidence="1">Belongs to the CarA family.</text>
</comment>
<name>CARA_ECO57</name>
<accession>P0A6F2</accession>
<accession>P00907</accession>
<protein>
    <recommendedName>
        <fullName evidence="1">Carbamoyl phosphate synthase small chain</fullName>
        <ecNumber evidence="1">6.3.5.5</ecNumber>
    </recommendedName>
    <alternativeName>
        <fullName evidence="1">Carbamoyl phosphate synthetase glutamine chain</fullName>
    </alternativeName>
</protein>